<feature type="chain" id="PRO_1000139037" description="Acyl carrier protein">
    <location>
        <begin position="1"/>
        <end position="81"/>
    </location>
</feature>
<feature type="domain" description="Carrier" evidence="2">
    <location>
        <begin position="2"/>
        <end position="80"/>
    </location>
</feature>
<feature type="modified residue" description="O-(pantetheine 4'-phosphoryl)serine" evidence="2">
    <location>
        <position position="40"/>
    </location>
</feature>
<comment type="function">
    <text evidence="1">Carrier of the growing fatty acid chain in fatty acid biosynthesis.</text>
</comment>
<comment type="pathway">
    <text evidence="1">Lipid metabolism; fatty acid biosynthesis.</text>
</comment>
<comment type="subcellular location">
    <subcellularLocation>
        <location evidence="1">Cytoplasm</location>
    </subcellularLocation>
</comment>
<comment type="PTM">
    <text evidence="1">4'-phosphopantetheine is transferred from CoA to a specific serine of apo-ACP by AcpS. This modification is essential for activity because fatty acids are bound in thioester linkage to the sulfhydryl of the prosthetic group.</text>
</comment>
<comment type="similarity">
    <text evidence="1">Belongs to the acyl carrier protein (ACP) family.</text>
</comment>
<reference key="1">
    <citation type="journal article" date="2008" name="J. Bacteriol.">
        <title>Complete genome sequence of the soil actinomycete Kocuria rhizophila.</title>
        <authorList>
            <person name="Takarada H."/>
            <person name="Sekine M."/>
            <person name="Kosugi H."/>
            <person name="Matsuo Y."/>
            <person name="Fujisawa T."/>
            <person name="Omata S."/>
            <person name="Kishi E."/>
            <person name="Shimizu A."/>
            <person name="Tsukatani N."/>
            <person name="Tanikawa S."/>
            <person name="Fujita N."/>
            <person name="Harayama S."/>
        </authorList>
    </citation>
    <scope>NUCLEOTIDE SEQUENCE [LARGE SCALE GENOMIC DNA]</scope>
    <source>
        <strain>ATCC 9341 / DSM 348 / NBRC 103217 / DC2201</strain>
    </source>
</reference>
<name>ACP_KOCRD</name>
<protein>
    <recommendedName>
        <fullName evidence="1">Acyl carrier protein</fullName>
        <shortName evidence="1">ACP</shortName>
    </recommendedName>
</protein>
<sequence>MASKDEILAGLAEIVNEETGLETEAVQLEKSFTEDLDIDSISMMTIVVNAEEKFDVTIPDEEVKNLKTVEDAVNFIDNAQA</sequence>
<organism>
    <name type="scientific">Kocuria rhizophila (strain ATCC 9341 / DSM 348 / NBRC 103217 / DC2201)</name>
    <dbReference type="NCBI Taxonomy" id="378753"/>
    <lineage>
        <taxon>Bacteria</taxon>
        <taxon>Bacillati</taxon>
        <taxon>Actinomycetota</taxon>
        <taxon>Actinomycetes</taxon>
        <taxon>Micrococcales</taxon>
        <taxon>Micrococcaceae</taxon>
        <taxon>Kocuria</taxon>
    </lineage>
</organism>
<evidence type="ECO:0000255" key="1">
    <source>
        <dbReference type="HAMAP-Rule" id="MF_01217"/>
    </source>
</evidence>
<evidence type="ECO:0000255" key="2">
    <source>
        <dbReference type="PROSITE-ProRule" id="PRU00258"/>
    </source>
</evidence>
<dbReference type="EMBL" id="AP009152">
    <property type="protein sequence ID" value="BAG29424.1"/>
    <property type="molecule type" value="Genomic_DNA"/>
</dbReference>
<dbReference type="RefSeq" id="WP_012398145.1">
    <property type="nucleotide sequence ID" value="NZ_VECX01000005.1"/>
</dbReference>
<dbReference type="SMR" id="B2GFZ6"/>
<dbReference type="STRING" id="378753.KRH_10770"/>
<dbReference type="KEGG" id="krh:KRH_10770"/>
<dbReference type="eggNOG" id="COG0236">
    <property type="taxonomic scope" value="Bacteria"/>
</dbReference>
<dbReference type="HOGENOM" id="CLU_108696_5_6_11"/>
<dbReference type="OrthoDB" id="9804551at2"/>
<dbReference type="UniPathway" id="UPA00094"/>
<dbReference type="Proteomes" id="UP000008838">
    <property type="component" value="Chromosome"/>
</dbReference>
<dbReference type="GO" id="GO:0005829">
    <property type="term" value="C:cytosol"/>
    <property type="evidence" value="ECO:0007669"/>
    <property type="project" value="TreeGrafter"/>
</dbReference>
<dbReference type="GO" id="GO:0016020">
    <property type="term" value="C:membrane"/>
    <property type="evidence" value="ECO:0007669"/>
    <property type="project" value="GOC"/>
</dbReference>
<dbReference type="GO" id="GO:0000035">
    <property type="term" value="F:acyl binding"/>
    <property type="evidence" value="ECO:0007669"/>
    <property type="project" value="TreeGrafter"/>
</dbReference>
<dbReference type="GO" id="GO:0000036">
    <property type="term" value="F:acyl carrier activity"/>
    <property type="evidence" value="ECO:0007669"/>
    <property type="project" value="UniProtKB-UniRule"/>
</dbReference>
<dbReference type="GO" id="GO:0009245">
    <property type="term" value="P:lipid A biosynthetic process"/>
    <property type="evidence" value="ECO:0007669"/>
    <property type="project" value="TreeGrafter"/>
</dbReference>
<dbReference type="Gene3D" id="1.10.1200.10">
    <property type="entry name" value="ACP-like"/>
    <property type="match status" value="1"/>
</dbReference>
<dbReference type="HAMAP" id="MF_01217">
    <property type="entry name" value="Acyl_carrier"/>
    <property type="match status" value="1"/>
</dbReference>
<dbReference type="InterPro" id="IPR003231">
    <property type="entry name" value="ACP"/>
</dbReference>
<dbReference type="InterPro" id="IPR036736">
    <property type="entry name" value="ACP-like_sf"/>
</dbReference>
<dbReference type="InterPro" id="IPR009081">
    <property type="entry name" value="PP-bd_ACP"/>
</dbReference>
<dbReference type="NCBIfam" id="NF002147">
    <property type="entry name" value="PRK00982.1-1"/>
    <property type="match status" value="1"/>
</dbReference>
<dbReference type="NCBIfam" id="NF002150">
    <property type="entry name" value="PRK00982.1-4"/>
    <property type="match status" value="1"/>
</dbReference>
<dbReference type="PANTHER" id="PTHR20863">
    <property type="entry name" value="ACYL CARRIER PROTEIN"/>
    <property type="match status" value="1"/>
</dbReference>
<dbReference type="PANTHER" id="PTHR20863:SF76">
    <property type="entry name" value="CARRIER DOMAIN-CONTAINING PROTEIN"/>
    <property type="match status" value="1"/>
</dbReference>
<dbReference type="Pfam" id="PF00550">
    <property type="entry name" value="PP-binding"/>
    <property type="match status" value="1"/>
</dbReference>
<dbReference type="SUPFAM" id="SSF47336">
    <property type="entry name" value="ACP-like"/>
    <property type="match status" value="1"/>
</dbReference>
<dbReference type="PROSITE" id="PS50075">
    <property type="entry name" value="CARRIER"/>
    <property type="match status" value="1"/>
</dbReference>
<keyword id="KW-0963">Cytoplasm</keyword>
<keyword id="KW-0275">Fatty acid biosynthesis</keyword>
<keyword id="KW-0276">Fatty acid metabolism</keyword>
<keyword id="KW-0444">Lipid biosynthesis</keyword>
<keyword id="KW-0443">Lipid metabolism</keyword>
<keyword id="KW-0596">Phosphopantetheine</keyword>
<keyword id="KW-0597">Phosphoprotein</keyword>
<keyword id="KW-1185">Reference proteome</keyword>
<proteinExistence type="inferred from homology"/>
<accession>B2GFZ6</accession>
<gene>
    <name evidence="1" type="primary">acpP</name>
    <name type="ordered locus">KRH_10770</name>
</gene>